<reference key="1">
    <citation type="journal article" date="2010" name="PLoS Genet.">
        <title>Genome sequence of the plant growth promoting endophytic bacterium Enterobacter sp. 638.</title>
        <authorList>
            <person name="Taghavi S."/>
            <person name="van der Lelie D."/>
            <person name="Hoffman A."/>
            <person name="Zhang Y.B."/>
            <person name="Walla M.D."/>
            <person name="Vangronsveld J."/>
            <person name="Newman L."/>
            <person name="Monchy S."/>
        </authorList>
    </citation>
    <scope>NUCLEOTIDE SEQUENCE [LARGE SCALE GENOMIC DNA]</scope>
    <source>
        <strain>638</strain>
    </source>
</reference>
<accession>A4WDA8</accession>
<feature type="chain" id="PRO_1000083012" description="Co-chaperone protein HscB">
    <location>
        <begin position="1"/>
        <end position="171"/>
    </location>
</feature>
<feature type="domain" description="J" evidence="1">
    <location>
        <begin position="2"/>
        <end position="74"/>
    </location>
</feature>
<protein>
    <recommendedName>
        <fullName evidence="1">Co-chaperone protein HscB</fullName>
    </recommendedName>
    <alternativeName>
        <fullName evidence="1">Hsc20</fullName>
    </alternativeName>
</protein>
<sequence>MDYFTLFGLPAQYSIDLPALTIRFQDLQRQFHPDKFASGTPAEQLAAVSQSATINQAWQTLRNPLARAEYLLSLHGFDLTSEQHTVRDTAFLMEQLELREELDEIDQAKDEARLESFIKRVKGMFDSRHQQMVEQLNNETWDVAADSVRKLRFLDKLRSSAEQLEEKLLDF</sequence>
<gene>
    <name evidence="1" type="primary">hscB</name>
    <name type="ordered locus">Ent638_3024</name>
</gene>
<proteinExistence type="inferred from homology"/>
<name>HSCB_ENT38</name>
<evidence type="ECO:0000255" key="1">
    <source>
        <dbReference type="HAMAP-Rule" id="MF_00682"/>
    </source>
</evidence>
<comment type="function">
    <text evidence="1">Co-chaperone involved in the maturation of iron-sulfur cluster-containing proteins. Seems to help targeting proteins to be folded toward HscA.</text>
</comment>
<comment type="subunit">
    <text evidence="1">Interacts with HscA and stimulates its ATPase activity. Interacts with IscU.</text>
</comment>
<comment type="similarity">
    <text evidence="1">Belongs to the HscB family.</text>
</comment>
<keyword id="KW-0143">Chaperone</keyword>
<dbReference type="EMBL" id="CP000653">
    <property type="protein sequence ID" value="ABP61688.1"/>
    <property type="molecule type" value="Genomic_DNA"/>
</dbReference>
<dbReference type="RefSeq" id="WP_015960020.1">
    <property type="nucleotide sequence ID" value="NC_009436.1"/>
</dbReference>
<dbReference type="SMR" id="A4WDA8"/>
<dbReference type="STRING" id="399742.Ent638_3024"/>
<dbReference type="KEGG" id="ent:Ent638_3024"/>
<dbReference type="eggNOG" id="COG1076">
    <property type="taxonomic scope" value="Bacteria"/>
</dbReference>
<dbReference type="HOGENOM" id="CLU_068529_2_0_6"/>
<dbReference type="OrthoDB" id="287587at2"/>
<dbReference type="Proteomes" id="UP000000230">
    <property type="component" value="Chromosome"/>
</dbReference>
<dbReference type="GO" id="GO:1990230">
    <property type="term" value="C:iron-sulfur cluster transfer complex"/>
    <property type="evidence" value="ECO:0007669"/>
    <property type="project" value="TreeGrafter"/>
</dbReference>
<dbReference type="GO" id="GO:0001671">
    <property type="term" value="F:ATPase activator activity"/>
    <property type="evidence" value="ECO:0007669"/>
    <property type="project" value="InterPro"/>
</dbReference>
<dbReference type="GO" id="GO:0051087">
    <property type="term" value="F:protein-folding chaperone binding"/>
    <property type="evidence" value="ECO:0007669"/>
    <property type="project" value="InterPro"/>
</dbReference>
<dbReference type="GO" id="GO:0044571">
    <property type="term" value="P:[2Fe-2S] cluster assembly"/>
    <property type="evidence" value="ECO:0007669"/>
    <property type="project" value="InterPro"/>
</dbReference>
<dbReference type="GO" id="GO:0051259">
    <property type="term" value="P:protein complex oligomerization"/>
    <property type="evidence" value="ECO:0007669"/>
    <property type="project" value="InterPro"/>
</dbReference>
<dbReference type="GO" id="GO:0006457">
    <property type="term" value="P:protein folding"/>
    <property type="evidence" value="ECO:0007669"/>
    <property type="project" value="UniProtKB-UniRule"/>
</dbReference>
<dbReference type="CDD" id="cd06257">
    <property type="entry name" value="DnaJ"/>
    <property type="match status" value="1"/>
</dbReference>
<dbReference type="FunFam" id="1.10.287.110:FF:000008">
    <property type="entry name" value="Co-chaperone protein HscB"/>
    <property type="match status" value="1"/>
</dbReference>
<dbReference type="FunFam" id="1.20.1280.20:FF:000001">
    <property type="entry name" value="Co-chaperone protein HscB"/>
    <property type="match status" value="1"/>
</dbReference>
<dbReference type="Gene3D" id="1.10.287.110">
    <property type="entry name" value="DnaJ domain"/>
    <property type="match status" value="1"/>
</dbReference>
<dbReference type="Gene3D" id="1.20.1280.20">
    <property type="entry name" value="HscB, C-terminal domain"/>
    <property type="match status" value="1"/>
</dbReference>
<dbReference type="HAMAP" id="MF_00682">
    <property type="entry name" value="HscB"/>
    <property type="match status" value="1"/>
</dbReference>
<dbReference type="InterPro" id="IPR001623">
    <property type="entry name" value="DnaJ_domain"/>
</dbReference>
<dbReference type="InterPro" id="IPR004640">
    <property type="entry name" value="HscB"/>
</dbReference>
<dbReference type="InterPro" id="IPR036386">
    <property type="entry name" value="HscB_C_sf"/>
</dbReference>
<dbReference type="InterPro" id="IPR009073">
    <property type="entry name" value="HscB_oligo_C"/>
</dbReference>
<dbReference type="InterPro" id="IPR036869">
    <property type="entry name" value="J_dom_sf"/>
</dbReference>
<dbReference type="NCBIfam" id="TIGR00714">
    <property type="entry name" value="hscB"/>
    <property type="match status" value="1"/>
</dbReference>
<dbReference type="NCBIfam" id="NF003449">
    <property type="entry name" value="PRK05014.1"/>
    <property type="match status" value="1"/>
</dbReference>
<dbReference type="PANTHER" id="PTHR14021">
    <property type="entry name" value="IRON-SULFUR CLUSTER CO-CHAPERONE PROTEIN HSCB"/>
    <property type="match status" value="1"/>
</dbReference>
<dbReference type="PANTHER" id="PTHR14021:SF15">
    <property type="entry name" value="IRON-SULFUR CLUSTER CO-CHAPERONE PROTEIN HSCB"/>
    <property type="match status" value="1"/>
</dbReference>
<dbReference type="Pfam" id="PF07743">
    <property type="entry name" value="HSCB_C"/>
    <property type="match status" value="1"/>
</dbReference>
<dbReference type="SMART" id="SM00271">
    <property type="entry name" value="DnaJ"/>
    <property type="match status" value="1"/>
</dbReference>
<dbReference type="SUPFAM" id="SSF46565">
    <property type="entry name" value="Chaperone J-domain"/>
    <property type="match status" value="1"/>
</dbReference>
<dbReference type="SUPFAM" id="SSF47144">
    <property type="entry name" value="HSC20 (HSCB), C-terminal oligomerisation domain"/>
    <property type="match status" value="1"/>
</dbReference>
<dbReference type="PROSITE" id="PS50076">
    <property type="entry name" value="DNAJ_2"/>
    <property type="match status" value="1"/>
</dbReference>
<organism>
    <name type="scientific">Enterobacter sp. (strain 638)</name>
    <dbReference type="NCBI Taxonomy" id="399742"/>
    <lineage>
        <taxon>Bacteria</taxon>
        <taxon>Pseudomonadati</taxon>
        <taxon>Pseudomonadota</taxon>
        <taxon>Gammaproteobacteria</taxon>
        <taxon>Enterobacterales</taxon>
        <taxon>Enterobacteriaceae</taxon>
        <taxon>Enterobacter</taxon>
    </lineage>
</organism>